<name>MINC_BACC2</name>
<gene>
    <name evidence="1" type="primary">minC</name>
    <name type="ordered locus">BCG9842_B0666</name>
</gene>
<comment type="function">
    <text evidence="1">Cell division inhibitor that blocks the formation of polar Z ring septums. Rapidly oscillates between the poles of the cell to destabilize FtsZ filaments that have formed before they mature into polar Z rings. Prevents FtsZ polymerization.</text>
</comment>
<comment type="subunit">
    <text evidence="1">Interacts with MinD and FtsZ.</text>
</comment>
<comment type="similarity">
    <text evidence="1">Belongs to the MinC family.</text>
</comment>
<sequence length="228" mass="25155">MEEKKQQNVTIKGTKDGITLHLDDCCSFSELLIELDEKLSTHYYDGDGRSLIEVHVKVGNRYLTEVQQEEIRTLIRNKKNLVVDSIKSDVITKAEAIAWKEETEIVPISKIVRSGQVLHVKGNLLLIGDVNPGGTVIAGGNIFVVGSLRGIAHAGYYGDSDAVIAASVMNPMQLRISDVAMRAPEEKEDGAEAAECAYINENNHIVVDRLQLLTHLRPNLTKLERGIV</sequence>
<keyword id="KW-0131">Cell cycle</keyword>
<keyword id="KW-0132">Cell division</keyword>
<keyword id="KW-0717">Septation</keyword>
<evidence type="ECO:0000255" key="1">
    <source>
        <dbReference type="HAMAP-Rule" id="MF_00267"/>
    </source>
</evidence>
<protein>
    <recommendedName>
        <fullName evidence="1">Probable septum site-determining protein MinC</fullName>
    </recommendedName>
</protein>
<proteinExistence type="inferred from homology"/>
<accession>B7IIW1</accession>
<organism>
    <name type="scientific">Bacillus cereus (strain G9842)</name>
    <dbReference type="NCBI Taxonomy" id="405531"/>
    <lineage>
        <taxon>Bacteria</taxon>
        <taxon>Bacillati</taxon>
        <taxon>Bacillota</taxon>
        <taxon>Bacilli</taxon>
        <taxon>Bacillales</taxon>
        <taxon>Bacillaceae</taxon>
        <taxon>Bacillus</taxon>
        <taxon>Bacillus cereus group</taxon>
    </lineage>
</organism>
<feature type="chain" id="PRO_1000191234" description="Probable septum site-determining protein MinC">
    <location>
        <begin position="1"/>
        <end position="228"/>
    </location>
</feature>
<reference key="1">
    <citation type="submission" date="2008-10" db="EMBL/GenBank/DDBJ databases">
        <title>Genome sequence of Bacillus cereus G9842.</title>
        <authorList>
            <person name="Dodson R.J."/>
            <person name="Durkin A.S."/>
            <person name="Rosovitz M.J."/>
            <person name="Rasko D.A."/>
            <person name="Hoffmaster A."/>
            <person name="Ravel J."/>
            <person name="Sutton G."/>
        </authorList>
    </citation>
    <scope>NUCLEOTIDE SEQUENCE [LARGE SCALE GENOMIC DNA]</scope>
    <source>
        <strain>G9842</strain>
    </source>
</reference>
<dbReference type="EMBL" id="CP001186">
    <property type="protein sequence ID" value="ACK98067.1"/>
    <property type="molecule type" value="Genomic_DNA"/>
</dbReference>
<dbReference type="RefSeq" id="WP_000391514.1">
    <property type="nucleotide sequence ID" value="NC_011772.1"/>
</dbReference>
<dbReference type="SMR" id="B7IIW1"/>
<dbReference type="KEGG" id="bcg:BCG9842_B0666"/>
<dbReference type="HOGENOM" id="CLU_048711_1_1_9"/>
<dbReference type="Proteomes" id="UP000006744">
    <property type="component" value="Chromosome"/>
</dbReference>
<dbReference type="GO" id="GO:0000902">
    <property type="term" value="P:cell morphogenesis"/>
    <property type="evidence" value="ECO:0007669"/>
    <property type="project" value="InterPro"/>
</dbReference>
<dbReference type="GO" id="GO:0000917">
    <property type="term" value="P:division septum assembly"/>
    <property type="evidence" value="ECO:0007669"/>
    <property type="project" value="UniProtKB-KW"/>
</dbReference>
<dbReference type="GO" id="GO:1901891">
    <property type="term" value="P:regulation of cell septum assembly"/>
    <property type="evidence" value="ECO:0007669"/>
    <property type="project" value="InterPro"/>
</dbReference>
<dbReference type="FunFam" id="2.160.20.70:FF:000003">
    <property type="entry name" value="Probable septum site-determining protein MinC"/>
    <property type="match status" value="1"/>
</dbReference>
<dbReference type="FunFam" id="3.30.160.540:FF:000001">
    <property type="entry name" value="Probable septum site-determining protein MinC"/>
    <property type="match status" value="1"/>
</dbReference>
<dbReference type="Gene3D" id="2.160.20.70">
    <property type="match status" value="1"/>
</dbReference>
<dbReference type="Gene3D" id="3.30.160.540">
    <property type="match status" value="1"/>
</dbReference>
<dbReference type="HAMAP" id="MF_00267">
    <property type="entry name" value="MinC"/>
    <property type="match status" value="1"/>
</dbReference>
<dbReference type="InterPro" id="IPR016098">
    <property type="entry name" value="CAP/MinC_C"/>
</dbReference>
<dbReference type="InterPro" id="IPR013033">
    <property type="entry name" value="MinC"/>
</dbReference>
<dbReference type="InterPro" id="IPR036145">
    <property type="entry name" value="MinC_C_sf"/>
</dbReference>
<dbReference type="InterPro" id="IPR055219">
    <property type="entry name" value="MinC_N_1"/>
</dbReference>
<dbReference type="InterPro" id="IPR005526">
    <property type="entry name" value="Septum_form_inhib_MinC_C"/>
</dbReference>
<dbReference type="NCBIfam" id="TIGR01222">
    <property type="entry name" value="minC"/>
    <property type="match status" value="1"/>
</dbReference>
<dbReference type="PANTHER" id="PTHR34108">
    <property type="entry name" value="SEPTUM SITE-DETERMINING PROTEIN MINC"/>
    <property type="match status" value="1"/>
</dbReference>
<dbReference type="PANTHER" id="PTHR34108:SF1">
    <property type="entry name" value="SEPTUM SITE-DETERMINING PROTEIN MINC"/>
    <property type="match status" value="1"/>
</dbReference>
<dbReference type="Pfam" id="PF03775">
    <property type="entry name" value="MinC_C"/>
    <property type="match status" value="1"/>
</dbReference>
<dbReference type="Pfam" id="PF22642">
    <property type="entry name" value="MinC_N_1"/>
    <property type="match status" value="1"/>
</dbReference>
<dbReference type="SUPFAM" id="SSF63848">
    <property type="entry name" value="Cell-division inhibitor MinC, C-terminal domain"/>
    <property type="match status" value="1"/>
</dbReference>